<proteinExistence type="inferred from homology"/>
<feature type="chain" id="PRO_0000389853" description="Acetyl-coenzyme A carboxylase carboxyl transferase subunit beta">
    <location>
        <begin position="1"/>
        <end position="285"/>
    </location>
</feature>
<feature type="domain" description="CoA carboxyltransferase N-terminal" evidence="2">
    <location>
        <begin position="29"/>
        <end position="285"/>
    </location>
</feature>
<feature type="zinc finger region" description="C4-type" evidence="1">
    <location>
        <begin position="33"/>
        <end position="55"/>
    </location>
</feature>
<feature type="binding site" evidence="1">
    <location>
        <position position="33"/>
    </location>
    <ligand>
        <name>Zn(2+)</name>
        <dbReference type="ChEBI" id="CHEBI:29105"/>
    </ligand>
</feature>
<feature type="binding site" evidence="1">
    <location>
        <position position="36"/>
    </location>
    <ligand>
        <name>Zn(2+)</name>
        <dbReference type="ChEBI" id="CHEBI:29105"/>
    </ligand>
</feature>
<feature type="binding site" evidence="1">
    <location>
        <position position="52"/>
    </location>
    <ligand>
        <name>Zn(2+)</name>
        <dbReference type="ChEBI" id="CHEBI:29105"/>
    </ligand>
</feature>
<feature type="binding site" evidence="1">
    <location>
        <position position="55"/>
    </location>
    <ligand>
        <name>Zn(2+)</name>
        <dbReference type="ChEBI" id="CHEBI:29105"/>
    </ligand>
</feature>
<gene>
    <name evidence="1" type="primary">accD</name>
    <name type="ordered locus">SAHV_1687</name>
</gene>
<reference key="1">
    <citation type="journal article" date="2008" name="Antimicrob. Agents Chemother.">
        <title>Mutated response regulator graR is responsible for phenotypic conversion of Staphylococcus aureus from heterogeneous vancomycin-intermediate resistance to vancomycin-intermediate resistance.</title>
        <authorList>
            <person name="Neoh H.-M."/>
            <person name="Cui L."/>
            <person name="Yuzawa H."/>
            <person name="Takeuchi F."/>
            <person name="Matsuo M."/>
            <person name="Hiramatsu K."/>
        </authorList>
    </citation>
    <scope>NUCLEOTIDE SEQUENCE [LARGE SCALE GENOMIC DNA]</scope>
    <source>
        <strain>Mu3 / ATCC 700698</strain>
    </source>
</reference>
<accession>A7X3C8</accession>
<comment type="function">
    <text evidence="1">Component of the acetyl coenzyme A carboxylase (ACC) complex. Biotin carboxylase (BC) catalyzes the carboxylation of biotin on its carrier protein (BCCP) and then the CO(2) group is transferred by the transcarboxylase to acetyl-CoA to form malonyl-CoA.</text>
</comment>
<comment type="catalytic activity">
    <reaction evidence="1">
        <text>N(6)-carboxybiotinyl-L-lysyl-[protein] + acetyl-CoA = N(6)-biotinyl-L-lysyl-[protein] + malonyl-CoA</text>
        <dbReference type="Rhea" id="RHEA:54728"/>
        <dbReference type="Rhea" id="RHEA-COMP:10505"/>
        <dbReference type="Rhea" id="RHEA-COMP:10506"/>
        <dbReference type="ChEBI" id="CHEBI:57288"/>
        <dbReference type="ChEBI" id="CHEBI:57384"/>
        <dbReference type="ChEBI" id="CHEBI:83144"/>
        <dbReference type="ChEBI" id="CHEBI:83145"/>
        <dbReference type="EC" id="2.1.3.15"/>
    </reaction>
</comment>
<comment type="cofactor">
    <cofactor evidence="1">
        <name>Zn(2+)</name>
        <dbReference type="ChEBI" id="CHEBI:29105"/>
    </cofactor>
    <text evidence="1">Binds 1 zinc ion per subunit.</text>
</comment>
<comment type="pathway">
    <text evidence="1">Lipid metabolism; malonyl-CoA biosynthesis; malonyl-CoA from acetyl-CoA: step 1/1.</text>
</comment>
<comment type="subunit">
    <text evidence="1">Acetyl-CoA carboxylase is a heterohexamer composed of biotin carboxyl carrier protein (AccB), biotin carboxylase (AccC) and two subunits each of ACCase subunit alpha (AccA) and ACCase subunit beta (AccD).</text>
</comment>
<comment type="subcellular location">
    <subcellularLocation>
        <location evidence="1">Cytoplasm</location>
    </subcellularLocation>
</comment>
<comment type="similarity">
    <text evidence="1">Belongs to the AccD/PCCB family.</text>
</comment>
<name>ACCD_STAA1</name>
<dbReference type="EC" id="2.1.3.15" evidence="1"/>
<dbReference type="EMBL" id="AP009324">
    <property type="protein sequence ID" value="BAF78570.1"/>
    <property type="molecule type" value="Genomic_DNA"/>
</dbReference>
<dbReference type="RefSeq" id="WP_000471571.1">
    <property type="nucleotide sequence ID" value="NZ_CTYB01000008.1"/>
</dbReference>
<dbReference type="SMR" id="A7X3C8"/>
<dbReference type="KEGG" id="saw:SAHV_1687"/>
<dbReference type="HOGENOM" id="CLU_015486_1_0_9"/>
<dbReference type="UniPathway" id="UPA00655">
    <property type="reaction ID" value="UER00711"/>
</dbReference>
<dbReference type="GO" id="GO:0009317">
    <property type="term" value="C:acetyl-CoA carboxylase complex"/>
    <property type="evidence" value="ECO:0007669"/>
    <property type="project" value="InterPro"/>
</dbReference>
<dbReference type="GO" id="GO:0003989">
    <property type="term" value="F:acetyl-CoA carboxylase activity"/>
    <property type="evidence" value="ECO:0007669"/>
    <property type="project" value="InterPro"/>
</dbReference>
<dbReference type="GO" id="GO:0005524">
    <property type="term" value="F:ATP binding"/>
    <property type="evidence" value="ECO:0007669"/>
    <property type="project" value="UniProtKB-KW"/>
</dbReference>
<dbReference type="GO" id="GO:0016743">
    <property type="term" value="F:carboxyl- or carbamoyltransferase activity"/>
    <property type="evidence" value="ECO:0007669"/>
    <property type="project" value="UniProtKB-UniRule"/>
</dbReference>
<dbReference type="GO" id="GO:0008270">
    <property type="term" value="F:zinc ion binding"/>
    <property type="evidence" value="ECO:0007669"/>
    <property type="project" value="UniProtKB-UniRule"/>
</dbReference>
<dbReference type="GO" id="GO:0006633">
    <property type="term" value="P:fatty acid biosynthetic process"/>
    <property type="evidence" value="ECO:0007669"/>
    <property type="project" value="UniProtKB-KW"/>
</dbReference>
<dbReference type="GO" id="GO:2001295">
    <property type="term" value="P:malonyl-CoA biosynthetic process"/>
    <property type="evidence" value="ECO:0007669"/>
    <property type="project" value="UniProtKB-UniRule"/>
</dbReference>
<dbReference type="Gene3D" id="3.90.226.10">
    <property type="entry name" value="2-enoyl-CoA Hydratase, Chain A, domain 1"/>
    <property type="match status" value="1"/>
</dbReference>
<dbReference type="HAMAP" id="MF_01395">
    <property type="entry name" value="AcetylCoA_CT_beta"/>
    <property type="match status" value="1"/>
</dbReference>
<dbReference type="InterPro" id="IPR034733">
    <property type="entry name" value="AcCoA_carboxyl_beta"/>
</dbReference>
<dbReference type="InterPro" id="IPR000438">
    <property type="entry name" value="Acetyl_CoA_COase_Trfase_b_su"/>
</dbReference>
<dbReference type="InterPro" id="IPR029045">
    <property type="entry name" value="ClpP/crotonase-like_dom_sf"/>
</dbReference>
<dbReference type="InterPro" id="IPR011762">
    <property type="entry name" value="COA_CT_N"/>
</dbReference>
<dbReference type="InterPro" id="IPR041010">
    <property type="entry name" value="Znf-ACC"/>
</dbReference>
<dbReference type="NCBIfam" id="TIGR00515">
    <property type="entry name" value="accD"/>
    <property type="match status" value="1"/>
</dbReference>
<dbReference type="PANTHER" id="PTHR42995">
    <property type="entry name" value="ACETYL-COENZYME A CARBOXYLASE CARBOXYL TRANSFERASE SUBUNIT BETA, CHLOROPLASTIC"/>
    <property type="match status" value="1"/>
</dbReference>
<dbReference type="PANTHER" id="PTHR42995:SF5">
    <property type="entry name" value="ACETYL-COENZYME A CARBOXYLASE CARBOXYL TRANSFERASE SUBUNIT BETA, CHLOROPLASTIC"/>
    <property type="match status" value="1"/>
</dbReference>
<dbReference type="Pfam" id="PF01039">
    <property type="entry name" value="Carboxyl_trans"/>
    <property type="match status" value="1"/>
</dbReference>
<dbReference type="Pfam" id="PF17848">
    <property type="entry name" value="Zn_ribbon_ACC"/>
    <property type="match status" value="1"/>
</dbReference>
<dbReference type="PRINTS" id="PR01070">
    <property type="entry name" value="ACCCTRFRASEB"/>
</dbReference>
<dbReference type="SUPFAM" id="SSF52096">
    <property type="entry name" value="ClpP/crotonase"/>
    <property type="match status" value="1"/>
</dbReference>
<dbReference type="PROSITE" id="PS50980">
    <property type="entry name" value="COA_CT_NTER"/>
    <property type="match status" value="1"/>
</dbReference>
<protein>
    <recommendedName>
        <fullName evidence="1">Acetyl-coenzyme A carboxylase carboxyl transferase subunit beta</fullName>
        <shortName evidence="1">ACCase subunit beta</shortName>
        <shortName evidence="1">Acetyl-CoA carboxylase carboxyltransferase subunit beta</shortName>
        <ecNumber evidence="1">2.1.3.15</ecNumber>
    </recommendedName>
</protein>
<organism>
    <name type="scientific">Staphylococcus aureus (strain Mu3 / ATCC 700698)</name>
    <dbReference type="NCBI Taxonomy" id="418127"/>
    <lineage>
        <taxon>Bacteria</taxon>
        <taxon>Bacillati</taxon>
        <taxon>Bacillota</taxon>
        <taxon>Bacilli</taxon>
        <taxon>Bacillales</taxon>
        <taxon>Staphylococcaceae</taxon>
        <taxon>Staphylococcus</taxon>
    </lineage>
</organism>
<keyword id="KW-0067">ATP-binding</keyword>
<keyword id="KW-0963">Cytoplasm</keyword>
<keyword id="KW-0275">Fatty acid biosynthesis</keyword>
<keyword id="KW-0276">Fatty acid metabolism</keyword>
<keyword id="KW-0444">Lipid biosynthesis</keyword>
<keyword id="KW-0443">Lipid metabolism</keyword>
<keyword id="KW-0479">Metal-binding</keyword>
<keyword id="KW-0547">Nucleotide-binding</keyword>
<keyword id="KW-0808">Transferase</keyword>
<keyword id="KW-0862">Zinc</keyword>
<keyword id="KW-0863">Zinc-finger</keyword>
<sequence>MFKDFFNRTKKKKYLTVQDSKNNDVPAGIMTKCPKCKKIMYTKELAENLNVCFNCDHHIALTAYKRIEAISDEGSFTEFDKGMTSANPLDFPSYLEKIEKDQQKTGLKEAVVTGTAQLDGMKFGVAVMDSRFRMGSMGSVIGEKICRIIDYCTENRLPFILFSASGGARMQEGIISLMQMGKTSVSLKRHSDAGLLYISYLTHPTTGGVSASFASVGDINLSEPKALIGFAGRRVIEQTINEKLPDDFQTAEFLLEHGQLDKVVHRNDMRQTLSEILKIHQEVTK</sequence>
<evidence type="ECO:0000255" key="1">
    <source>
        <dbReference type="HAMAP-Rule" id="MF_01395"/>
    </source>
</evidence>
<evidence type="ECO:0000255" key="2">
    <source>
        <dbReference type="PROSITE-ProRule" id="PRU01136"/>
    </source>
</evidence>